<reference key="1">
    <citation type="journal article" date="2005" name="Nat. Biotechnol.">
        <title>Genome sequence of the chlorinated compound-respiring bacterium Dehalococcoides species strain CBDB1.</title>
        <authorList>
            <person name="Kube M."/>
            <person name="Beck A."/>
            <person name="Zinder S.H."/>
            <person name="Kuhl H."/>
            <person name="Reinhardt R."/>
            <person name="Adrian L."/>
        </authorList>
    </citation>
    <scope>NUCLEOTIDE SEQUENCE [LARGE SCALE GENOMIC DNA]</scope>
    <source>
        <strain>CBDB1</strain>
    </source>
</reference>
<protein>
    <recommendedName>
        <fullName evidence="1">Large ribosomal subunit protein bL27</fullName>
    </recommendedName>
    <alternativeName>
        <fullName evidence="3">50S ribosomal protein L27</fullName>
    </alternativeName>
</protein>
<gene>
    <name evidence="1" type="primary">rpmA</name>
    <name type="ordered locus">cbdbA1271</name>
</gene>
<proteinExistence type="inferred from homology"/>
<name>RL27_DEHMC</name>
<comment type="similarity">
    <text evidence="1">Belongs to the bacterial ribosomal protein bL27 family.</text>
</comment>
<organism>
    <name type="scientific">Dehalococcoides mccartyi (strain CBDB1)</name>
    <dbReference type="NCBI Taxonomy" id="255470"/>
    <lineage>
        <taxon>Bacteria</taxon>
        <taxon>Bacillati</taxon>
        <taxon>Chloroflexota</taxon>
        <taxon>Dehalococcoidia</taxon>
        <taxon>Dehalococcoidales</taxon>
        <taxon>Dehalococcoidaceae</taxon>
        <taxon>Dehalococcoides</taxon>
    </lineage>
</organism>
<feature type="chain" id="PRO_1000017465" description="Large ribosomal subunit protein bL27">
    <location>
        <begin position="1"/>
        <end position="84"/>
    </location>
</feature>
<feature type="region of interest" description="Disordered" evidence="2">
    <location>
        <begin position="1"/>
        <end position="21"/>
    </location>
</feature>
<dbReference type="EMBL" id="AJ965256">
    <property type="protein sequence ID" value="CAI83333.1"/>
    <property type="molecule type" value="Genomic_DNA"/>
</dbReference>
<dbReference type="RefSeq" id="WP_011309684.1">
    <property type="nucleotide sequence ID" value="NC_007356.1"/>
</dbReference>
<dbReference type="SMR" id="Q3ZYN4"/>
<dbReference type="KEGG" id="deh:cbdbA1271"/>
<dbReference type="HOGENOM" id="CLU_095424_4_1_0"/>
<dbReference type="Proteomes" id="UP000000433">
    <property type="component" value="Chromosome"/>
</dbReference>
<dbReference type="GO" id="GO:1990904">
    <property type="term" value="C:ribonucleoprotein complex"/>
    <property type="evidence" value="ECO:0007669"/>
    <property type="project" value="UniProtKB-KW"/>
</dbReference>
<dbReference type="GO" id="GO:0005840">
    <property type="term" value="C:ribosome"/>
    <property type="evidence" value="ECO:0007669"/>
    <property type="project" value="UniProtKB-KW"/>
</dbReference>
<dbReference type="GO" id="GO:0003735">
    <property type="term" value="F:structural constituent of ribosome"/>
    <property type="evidence" value="ECO:0007669"/>
    <property type="project" value="InterPro"/>
</dbReference>
<dbReference type="GO" id="GO:0006412">
    <property type="term" value="P:translation"/>
    <property type="evidence" value="ECO:0007669"/>
    <property type="project" value="UniProtKB-UniRule"/>
</dbReference>
<dbReference type="FunFam" id="2.40.50.100:FF:000004">
    <property type="entry name" value="50S ribosomal protein L27"/>
    <property type="match status" value="1"/>
</dbReference>
<dbReference type="Gene3D" id="2.40.50.100">
    <property type="match status" value="1"/>
</dbReference>
<dbReference type="HAMAP" id="MF_00539">
    <property type="entry name" value="Ribosomal_bL27"/>
    <property type="match status" value="1"/>
</dbReference>
<dbReference type="InterPro" id="IPR001684">
    <property type="entry name" value="Ribosomal_bL27"/>
</dbReference>
<dbReference type="InterPro" id="IPR018261">
    <property type="entry name" value="Ribosomal_bL27_CS"/>
</dbReference>
<dbReference type="NCBIfam" id="TIGR00062">
    <property type="entry name" value="L27"/>
    <property type="match status" value="1"/>
</dbReference>
<dbReference type="PANTHER" id="PTHR15893:SF0">
    <property type="entry name" value="LARGE RIBOSOMAL SUBUNIT PROTEIN BL27M"/>
    <property type="match status" value="1"/>
</dbReference>
<dbReference type="PANTHER" id="PTHR15893">
    <property type="entry name" value="RIBOSOMAL PROTEIN L27"/>
    <property type="match status" value="1"/>
</dbReference>
<dbReference type="Pfam" id="PF01016">
    <property type="entry name" value="Ribosomal_L27"/>
    <property type="match status" value="1"/>
</dbReference>
<dbReference type="PRINTS" id="PR00063">
    <property type="entry name" value="RIBOSOMALL27"/>
</dbReference>
<dbReference type="SUPFAM" id="SSF110324">
    <property type="entry name" value="Ribosomal L27 protein-like"/>
    <property type="match status" value="1"/>
</dbReference>
<dbReference type="PROSITE" id="PS00831">
    <property type="entry name" value="RIBOSOMAL_L27"/>
    <property type="match status" value="1"/>
</dbReference>
<evidence type="ECO:0000255" key="1">
    <source>
        <dbReference type="HAMAP-Rule" id="MF_00539"/>
    </source>
</evidence>
<evidence type="ECO:0000256" key="2">
    <source>
        <dbReference type="SAM" id="MobiDB-lite"/>
    </source>
</evidence>
<evidence type="ECO:0000305" key="3"/>
<accession>Q3ZYN4</accession>
<sequence length="84" mass="9109">MAHKKGAGSTKNGRDSKPKMLGVKRFAGEKVNSGTIIVRQRGTHIHPGENVGLGRDYTIFATCEGVVKFEPTTNDRRKVSVVAD</sequence>
<keyword id="KW-0687">Ribonucleoprotein</keyword>
<keyword id="KW-0689">Ribosomal protein</keyword>